<organism>
    <name type="scientific">Yersinia pseudotuberculosis serotype O:3 (strain YPIII)</name>
    <dbReference type="NCBI Taxonomy" id="502800"/>
    <lineage>
        <taxon>Bacteria</taxon>
        <taxon>Pseudomonadati</taxon>
        <taxon>Pseudomonadota</taxon>
        <taxon>Gammaproteobacteria</taxon>
        <taxon>Enterobacterales</taxon>
        <taxon>Yersiniaceae</taxon>
        <taxon>Yersinia</taxon>
    </lineage>
</organism>
<proteinExistence type="inferred from homology"/>
<protein>
    <recommendedName>
        <fullName evidence="1">Regulatory protein ViaA</fullName>
    </recommendedName>
    <alternativeName>
        <fullName evidence="1">VWA interacting with AAA+ ATPase</fullName>
    </alternativeName>
</protein>
<feature type="chain" id="PRO_1000186166" description="Regulatory protein ViaA">
    <location>
        <begin position="1"/>
        <end position="488"/>
    </location>
</feature>
<evidence type="ECO:0000255" key="1">
    <source>
        <dbReference type="HAMAP-Rule" id="MF_01626"/>
    </source>
</evidence>
<comment type="function">
    <text evidence="1">Component of the RavA-ViaA chaperone complex, which may act on the membrane to optimize the function of some of the respiratory chains. ViaA stimulates the ATPase activity of RavA.</text>
</comment>
<comment type="subunit">
    <text evidence="1">Homodimer. Interacts with RavA.</text>
</comment>
<comment type="subcellular location">
    <subcellularLocation>
        <location evidence="1">Cytoplasm</location>
    </subcellularLocation>
</comment>
<comment type="similarity">
    <text evidence="1">Belongs to the ViaA family.</text>
</comment>
<name>VIAA_YERPY</name>
<dbReference type="EMBL" id="CP000950">
    <property type="protein sequence ID" value="ACA70469.1"/>
    <property type="molecule type" value="Genomic_DNA"/>
</dbReference>
<dbReference type="RefSeq" id="WP_002212255.1">
    <property type="nucleotide sequence ID" value="NZ_CP009792.1"/>
</dbReference>
<dbReference type="SMR" id="B1JR28"/>
<dbReference type="GeneID" id="57974590"/>
<dbReference type="KEGG" id="ypy:YPK_4213"/>
<dbReference type="PATRIC" id="fig|502800.11.peg.563"/>
<dbReference type="GO" id="GO:0005829">
    <property type="term" value="C:cytosol"/>
    <property type="evidence" value="ECO:0007669"/>
    <property type="project" value="TreeGrafter"/>
</dbReference>
<dbReference type="CDD" id="cd01462">
    <property type="entry name" value="VWA_YIEM_type"/>
    <property type="match status" value="1"/>
</dbReference>
<dbReference type="Gene3D" id="3.40.50.410">
    <property type="entry name" value="von Willebrand factor, type A domain"/>
    <property type="match status" value="1"/>
</dbReference>
<dbReference type="HAMAP" id="MF_01626">
    <property type="entry name" value="ViaA"/>
    <property type="match status" value="1"/>
</dbReference>
<dbReference type="InterPro" id="IPR008912">
    <property type="entry name" value="Uncharacterised_CoxE"/>
</dbReference>
<dbReference type="InterPro" id="IPR023481">
    <property type="entry name" value="Uncharacterised_ViaA"/>
</dbReference>
<dbReference type="InterPro" id="IPR002035">
    <property type="entry name" value="VWF_A"/>
</dbReference>
<dbReference type="InterPro" id="IPR036465">
    <property type="entry name" value="vWFA_dom_sf"/>
</dbReference>
<dbReference type="NCBIfam" id="NF008230">
    <property type="entry name" value="PRK10997.1"/>
    <property type="match status" value="1"/>
</dbReference>
<dbReference type="PANTHER" id="PTHR36846">
    <property type="entry name" value="PROTEIN VIAA"/>
    <property type="match status" value="1"/>
</dbReference>
<dbReference type="PANTHER" id="PTHR36846:SF1">
    <property type="entry name" value="PROTEIN VIAA"/>
    <property type="match status" value="1"/>
</dbReference>
<dbReference type="Pfam" id="PF05762">
    <property type="entry name" value="VWA_CoxE"/>
    <property type="match status" value="1"/>
</dbReference>
<dbReference type="SMART" id="SM00327">
    <property type="entry name" value="VWA"/>
    <property type="match status" value="1"/>
</dbReference>
<dbReference type="SUPFAM" id="SSF53300">
    <property type="entry name" value="vWA-like"/>
    <property type="match status" value="1"/>
</dbReference>
<sequence length="488" mass="56081">MLSLATLDMLLSISEGELIEEMVVGLLAAPQLAIFFEKFPRIKRALMKDIPGWKQNLQQRIREASVPPGLANEFSLYQQSLLEDSPQFYAHLPDIVAQLQDLHSPFATQAKTLVQTADLAKNPPGGDSLQTLFLQRWRVSLILQTITIHHQLLEQEREQLLAELQRRLALSGALEPILTTNDNAAGRLWDMSQGHLQRGDYQLLLQYGDFLQQQPELIRLAEQLGRSRSAKAQPAPDARYEPYTVMVRQPDSVPEEVSGIHQSNDILRLLPTELVMLGMSELEFEFYRRLLERRLLTYRLQGDNWQEKTQQRPVSLKQNDEQPRGPFIVCVDTSGSMGGFNEQCAKAFCLALLRIALADNRRCYIMLFATEIIHYELSADNGIEQAIRFLNQHFRGGTDLAACLANTLNKMEDREWYDADAVIISDFIAQRLPEELVRKIKIQQQAHQHRFHAVAMSAYGKPGIMRIFDHIWRFDTSLKSRLIRRWKR</sequence>
<gene>
    <name evidence="1" type="primary">viaA</name>
    <name type="ordered locus">YPK_4213</name>
</gene>
<keyword id="KW-0143">Chaperone</keyword>
<keyword id="KW-0963">Cytoplasm</keyword>
<reference key="1">
    <citation type="submission" date="2008-02" db="EMBL/GenBank/DDBJ databases">
        <title>Complete sequence of Yersinia pseudotuberculosis YPIII.</title>
        <authorList>
            <consortium name="US DOE Joint Genome Institute"/>
            <person name="Copeland A."/>
            <person name="Lucas S."/>
            <person name="Lapidus A."/>
            <person name="Glavina del Rio T."/>
            <person name="Dalin E."/>
            <person name="Tice H."/>
            <person name="Bruce D."/>
            <person name="Goodwin L."/>
            <person name="Pitluck S."/>
            <person name="Munk A.C."/>
            <person name="Brettin T."/>
            <person name="Detter J.C."/>
            <person name="Han C."/>
            <person name="Tapia R."/>
            <person name="Schmutz J."/>
            <person name="Larimer F."/>
            <person name="Land M."/>
            <person name="Hauser L."/>
            <person name="Challacombe J.F."/>
            <person name="Green L."/>
            <person name="Lindler L.E."/>
            <person name="Nikolich M.P."/>
            <person name="Richardson P."/>
        </authorList>
    </citation>
    <scope>NUCLEOTIDE SEQUENCE [LARGE SCALE GENOMIC DNA]</scope>
    <source>
        <strain>YPIII</strain>
    </source>
</reference>
<accession>B1JR28</accession>